<protein>
    <recommendedName>
        <fullName evidence="1">Adenosine deaminase</fullName>
        <ecNumber evidence="1">3.5.4.4</ecNumber>
    </recommendedName>
    <alternativeName>
        <fullName evidence="1">Adenosine aminohydrolase</fullName>
    </alternativeName>
</protein>
<gene>
    <name evidence="1" type="primary">add</name>
    <name type="ordered locus">STY1658</name>
    <name type="ordered locus">t1331</name>
</gene>
<organism>
    <name type="scientific">Salmonella typhi</name>
    <dbReference type="NCBI Taxonomy" id="90370"/>
    <lineage>
        <taxon>Bacteria</taxon>
        <taxon>Pseudomonadati</taxon>
        <taxon>Pseudomonadota</taxon>
        <taxon>Gammaproteobacteria</taxon>
        <taxon>Enterobacterales</taxon>
        <taxon>Enterobacteriaceae</taxon>
        <taxon>Salmonella</taxon>
    </lineage>
</organism>
<name>ADD_SALTI</name>
<dbReference type="EC" id="3.5.4.4" evidence="1"/>
<dbReference type="EMBL" id="AL513382">
    <property type="protein sequence ID" value="CAD01904.1"/>
    <property type="molecule type" value="Genomic_DNA"/>
</dbReference>
<dbReference type="EMBL" id="AE014613">
    <property type="protein sequence ID" value="AAO68981.1"/>
    <property type="molecule type" value="Genomic_DNA"/>
</dbReference>
<dbReference type="RefSeq" id="NP_456067.1">
    <property type="nucleotide sequence ID" value="NC_003198.1"/>
</dbReference>
<dbReference type="RefSeq" id="WP_000565566.1">
    <property type="nucleotide sequence ID" value="NZ_WSUR01000011.1"/>
</dbReference>
<dbReference type="SMR" id="Q8Z6R2"/>
<dbReference type="STRING" id="220341.gene:17585594"/>
<dbReference type="KEGG" id="stt:t1331"/>
<dbReference type="KEGG" id="sty:STY1658"/>
<dbReference type="PATRIC" id="fig|220341.7.peg.1669"/>
<dbReference type="eggNOG" id="COG1816">
    <property type="taxonomic scope" value="Bacteria"/>
</dbReference>
<dbReference type="HOGENOM" id="CLU_039228_0_2_6"/>
<dbReference type="OMA" id="NHFTIHA"/>
<dbReference type="Proteomes" id="UP000000541">
    <property type="component" value="Chromosome"/>
</dbReference>
<dbReference type="Proteomes" id="UP000002670">
    <property type="component" value="Chromosome"/>
</dbReference>
<dbReference type="GO" id="GO:0005829">
    <property type="term" value="C:cytosol"/>
    <property type="evidence" value="ECO:0007669"/>
    <property type="project" value="TreeGrafter"/>
</dbReference>
<dbReference type="GO" id="GO:0046936">
    <property type="term" value="F:2'-deoxyadenosine deaminase activity"/>
    <property type="evidence" value="ECO:0007669"/>
    <property type="project" value="RHEA"/>
</dbReference>
<dbReference type="GO" id="GO:0004000">
    <property type="term" value="F:adenosine deaminase activity"/>
    <property type="evidence" value="ECO:0007669"/>
    <property type="project" value="UniProtKB-UniRule"/>
</dbReference>
<dbReference type="GO" id="GO:0008270">
    <property type="term" value="F:zinc ion binding"/>
    <property type="evidence" value="ECO:0007669"/>
    <property type="project" value="UniProtKB-UniRule"/>
</dbReference>
<dbReference type="GO" id="GO:0006154">
    <property type="term" value="P:adenosine catabolic process"/>
    <property type="evidence" value="ECO:0007669"/>
    <property type="project" value="TreeGrafter"/>
</dbReference>
<dbReference type="GO" id="GO:0043103">
    <property type="term" value="P:hypoxanthine salvage"/>
    <property type="evidence" value="ECO:0007669"/>
    <property type="project" value="TreeGrafter"/>
</dbReference>
<dbReference type="GO" id="GO:0046103">
    <property type="term" value="P:inosine biosynthetic process"/>
    <property type="evidence" value="ECO:0007669"/>
    <property type="project" value="TreeGrafter"/>
</dbReference>
<dbReference type="GO" id="GO:0009117">
    <property type="term" value="P:nucleotide metabolic process"/>
    <property type="evidence" value="ECO:0007669"/>
    <property type="project" value="UniProtKB-KW"/>
</dbReference>
<dbReference type="GO" id="GO:0009168">
    <property type="term" value="P:purine ribonucleoside monophosphate biosynthetic process"/>
    <property type="evidence" value="ECO:0007669"/>
    <property type="project" value="UniProtKB-UniRule"/>
</dbReference>
<dbReference type="CDD" id="cd01320">
    <property type="entry name" value="ADA"/>
    <property type="match status" value="1"/>
</dbReference>
<dbReference type="FunFam" id="3.20.20.140:FF:000009">
    <property type="entry name" value="Adenosine deaminase"/>
    <property type="match status" value="1"/>
</dbReference>
<dbReference type="Gene3D" id="3.20.20.140">
    <property type="entry name" value="Metal-dependent hydrolases"/>
    <property type="match status" value="1"/>
</dbReference>
<dbReference type="HAMAP" id="MF_00540">
    <property type="entry name" value="A_deaminase"/>
    <property type="match status" value="1"/>
</dbReference>
<dbReference type="InterPro" id="IPR006650">
    <property type="entry name" value="A/AMP_deam_AS"/>
</dbReference>
<dbReference type="InterPro" id="IPR028893">
    <property type="entry name" value="A_deaminase"/>
</dbReference>
<dbReference type="InterPro" id="IPR001365">
    <property type="entry name" value="A_deaminase_dom"/>
</dbReference>
<dbReference type="InterPro" id="IPR006330">
    <property type="entry name" value="Ado/ade_deaminase"/>
</dbReference>
<dbReference type="InterPro" id="IPR032466">
    <property type="entry name" value="Metal_Hydrolase"/>
</dbReference>
<dbReference type="NCBIfam" id="TIGR01430">
    <property type="entry name" value="aden_deam"/>
    <property type="match status" value="1"/>
</dbReference>
<dbReference type="NCBIfam" id="NF006846">
    <property type="entry name" value="PRK09358.1-1"/>
    <property type="match status" value="1"/>
</dbReference>
<dbReference type="PANTHER" id="PTHR11409">
    <property type="entry name" value="ADENOSINE DEAMINASE"/>
    <property type="match status" value="1"/>
</dbReference>
<dbReference type="PANTHER" id="PTHR11409:SF43">
    <property type="entry name" value="ADENOSINE DEAMINASE"/>
    <property type="match status" value="1"/>
</dbReference>
<dbReference type="Pfam" id="PF00962">
    <property type="entry name" value="A_deaminase"/>
    <property type="match status" value="1"/>
</dbReference>
<dbReference type="SUPFAM" id="SSF51556">
    <property type="entry name" value="Metallo-dependent hydrolases"/>
    <property type="match status" value="1"/>
</dbReference>
<dbReference type="PROSITE" id="PS00485">
    <property type="entry name" value="A_DEAMINASE"/>
    <property type="match status" value="1"/>
</dbReference>
<accession>Q8Z6R2</accession>
<sequence>MIDITLPLTDIHRHLDGNIRAQTILDLGRQFNIALPAQTLETLIPHVQVTSTEPDLVSFLTKLDWGVKVLASLDACRRVAFENIEDAARNGLHYVELRFSPGYMAMAHQLPIAGVVEAVIDGVRDGCNTFGVEARLIGIMSRTFGEAACLQELDALLAHREKITALDLAGDELGFPGSLFLSHFNRARDAGWHITVHAGEAAGPESIWQAIRELGAERIGHGVKAVEDRALMDFLAQQRIGIESCLTSNIQTSTVASLADHPLKTFLEHGVLASLNTDDPAVQGVDIIHEYHVAAPAAGLSREQIRQAQINGLEIAFLSDSEKRALREKVAAA</sequence>
<keyword id="KW-0378">Hydrolase</keyword>
<keyword id="KW-0479">Metal-binding</keyword>
<keyword id="KW-0546">Nucleotide metabolism</keyword>
<keyword id="KW-0862">Zinc</keyword>
<feature type="chain" id="PRO_0000194383" description="Adenosine deaminase">
    <location>
        <begin position="1"/>
        <end position="333"/>
    </location>
</feature>
<feature type="active site" description="Proton donor" evidence="1">
    <location>
        <position position="200"/>
    </location>
</feature>
<feature type="binding site" evidence="1">
    <location>
        <position position="12"/>
    </location>
    <ligand>
        <name>Zn(2+)</name>
        <dbReference type="ChEBI" id="CHEBI:29105"/>
        <note>catalytic</note>
    </ligand>
</feature>
<feature type="binding site" evidence="1">
    <location>
        <position position="14"/>
    </location>
    <ligand>
        <name>substrate</name>
    </ligand>
</feature>
<feature type="binding site" evidence="1">
    <location>
        <position position="14"/>
    </location>
    <ligand>
        <name>Zn(2+)</name>
        <dbReference type="ChEBI" id="CHEBI:29105"/>
        <note>catalytic</note>
    </ligand>
</feature>
<feature type="binding site" evidence="1">
    <location>
        <position position="16"/>
    </location>
    <ligand>
        <name>substrate</name>
    </ligand>
</feature>
<feature type="binding site" evidence="1">
    <location>
        <position position="170"/>
    </location>
    <ligand>
        <name>substrate</name>
    </ligand>
</feature>
<feature type="binding site" evidence="1">
    <location>
        <position position="197"/>
    </location>
    <ligand>
        <name>Zn(2+)</name>
        <dbReference type="ChEBI" id="CHEBI:29105"/>
        <note>catalytic</note>
    </ligand>
</feature>
<feature type="binding site" evidence="1">
    <location>
        <position position="278"/>
    </location>
    <ligand>
        <name>Zn(2+)</name>
        <dbReference type="ChEBI" id="CHEBI:29105"/>
        <note>catalytic</note>
    </ligand>
</feature>
<feature type="binding site" evidence="1">
    <location>
        <position position="279"/>
    </location>
    <ligand>
        <name>substrate</name>
    </ligand>
</feature>
<feature type="site" description="Important for catalytic activity" evidence="1">
    <location>
        <position position="221"/>
    </location>
</feature>
<evidence type="ECO:0000255" key="1">
    <source>
        <dbReference type="HAMAP-Rule" id="MF_00540"/>
    </source>
</evidence>
<reference key="1">
    <citation type="journal article" date="2001" name="Nature">
        <title>Complete genome sequence of a multiple drug resistant Salmonella enterica serovar Typhi CT18.</title>
        <authorList>
            <person name="Parkhill J."/>
            <person name="Dougan G."/>
            <person name="James K.D."/>
            <person name="Thomson N.R."/>
            <person name="Pickard D."/>
            <person name="Wain J."/>
            <person name="Churcher C.M."/>
            <person name="Mungall K.L."/>
            <person name="Bentley S.D."/>
            <person name="Holden M.T.G."/>
            <person name="Sebaihia M."/>
            <person name="Baker S."/>
            <person name="Basham D."/>
            <person name="Brooks K."/>
            <person name="Chillingworth T."/>
            <person name="Connerton P."/>
            <person name="Cronin A."/>
            <person name="Davis P."/>
            <person name="Davies R.M."/>
            <person name="Dowd L."/>
            <person name="White N."/>
            <person name="Farrar J."/>
            <person name="Feltwell T."/>
            <person name="Hamlin N."/>
            <person name="Haque A."/>
            <person name="Hien T.T."/>
            <person name="Holroyd S."/>
            <person name="Jagels K."/>
            <person name="Krogh A."/>
            <person name="Larsen T.S."/>
            <person name="Leather S."/>
            <person name="Moule S."/>
            <person name="O'Gaora P."/>
            <person name="Parry C."/>
            <person name="Quail M.A."/>
            <person name="Rutherford K.M."/>
            <person name="Simmonds M."/>
            <person name="Skelton J."/>
            <person name="Stevens K."/>
            <person name="Whitehead S."/>
            <person name="Barrell B.G."/>
        </authorList>
    </citation>
    <scope>NUCLEOTIDE SEQUENCE [LARGE SCALE GENOMIC DNA]</scope>
    <source>
        <strain>CT18</strain>
    </source>
</reference>
<reference key="2">
    <citation type="journal article" date="2003" name="J. Bacteriol.">
        <title>Comparative genomics of Salmonella enterica serovar Typhi strains Ty2 and CT18.</title>
        <authorList>
            <person name="Deng W."/>
            <person name="Liou S.-R."/>
            <person name="Plunkett G. III"/>
            <person name="Mayhew G.F."/>
            <person name="Rose D.J."/>
            <person name="Burland V."/>
            <person name="Kodoyianni V."/>
            <person name="Schwartz D.C."/>
            <person name="Blattner F.R."/>
        </authorList>
    </citation>
    <scope>NUCLEOTIDE SEQUENCE [LARGE SCALE GENOMIC DNA]</scope>
    <source>
        <strain>ATCC 700931 / Ty2</strain>
    </source>
</reference>
<comment type="function">
    <text evidence="1">Catalyzes the hydrolytic deamination of adenosine and 2-deoxyadenosine.</text>
</comment>
<comment type="catalytic activity">
    <reaction evidence="1">
        <text>adenosine + H2O + H(+) = inosine + NH4(+)</text>
        <dbReference type="Rhea" id="RHEA:24408"/>
        <dbReference type="ChEBI" id="CHEBI:15377"/>
        <dbReference type="ChEBI" id="CHEBI:15378"/>
        <dbReference type="ChEBI" id="CHEBI:16335"/>
        <dbReference type="ChEBI" id="CHEBI:17596"/>
        <dbReference type="ChEBI" id="CHEBI:28938"/>
        <dbReference type="EC" id="3.5.4.4"/>
    </reaction>
    <physiologicalReaction direction="left-to-right" evidence="1">
        <dbReference type="Rhea" id="RHEA:24409"/>
    </physiologicalReaction>
</comment>
<comment type="catalytic activity">
    <reaction evidence="1">
        <text>2'-deoxyadenosine + H2O + H(+) = 2'-deoxyinosine + NH4(+)</text>
        <dbReference type="Rhea" id="RHEA:28190"/>
        <dbReference type="ChEBI" id="CHEBI:15377"/>
        <dbReference type="ChEBI" id="CHEBI:15378"/>
        <dbReference type="ChEBI" id="CHEBI:17256"/>
        <dbReference type="ChEBI" id="CHEBI:28938"/>
        <dbReference type="ChEBI" id="CHEBI:28997"/>
        <dbReference type="EC" id="3.5.4.4"/>
    </reaction>
    <physiologicalReaction direction="left-to-right" evidence="1">
        <dbReference type="Rhea" id="RHEA:28191"/>
    </physiologicalReaction>
</comment>
<comment type="cofactor">
    <cofactor evidence="1">
        <name>Zn(2+)</name>
        <dbReference type="ChEBI" id="CHEBI:29105"/>
    </cofactor>
    <text evidence="1">Binds 1 zinc ion per subunit.</text>
</comment>
<comment type="similarity">
    <text evidence="1">Belongs to the metallo-dependent hydrolases superfamily. Adenosine and AMP deaminases family. Adenosine deaminase subfamily.</text>
</comment>
<proteinExistence type="inferred from homology"/>